<keyword id="KW-0004">4Fe-4S</keyword>
<keyword id="KW-0408">Iron</keyword>
<keyword id="KW-0411">Iron-sulfur</keyword>
<keyword id="KW-0414">Isoprene biosynthesis</keyword>
<keyword id="KW-0479">Metal-binding</keyword>
<keyword id="KW-0560">Oxidoreductase</keyword>
<accession>Q1MKH8</accession>
<proteinExistence type="inferred from homology"/>
<dbReference type="EC" id="1.17.7.4" evidence="1"/>
<dbReference type="EMBL" id="AM236080">
    <property type="protein sequence ID" value="CAK06527.1"/>
    <property type="molecule type" value="Genomic_DNA"/>
</dbReference>
<dbReference type="RefSeq" id="WP_011650764.1">
    <property type="nucleotide sequence ID" value="NC_008380.1"/>
</dbReference>
<dbReference type="SMR" id="Q1MKH8"/>
<dbReference type="EnsemblBacteria" id="CAK06527">
    <property type="protein sequence ID" value="CAK06527"/>
    <property type="gene ID" value="RL1030"/>
</dbReference>
<dbReference type="GeneID" id="61422572"/>
<dbReference type="KEGG" id="rle:RL1030"/>
<dbReference type="eggNOG" id="COG0761">
    <property type="taxonomic scope" value="Bacteria"/>
</dbReference>
<dbReference type="HOGENOM" id="CLU_027486_1_0_5"/>
<dbReference type="UniPathway" id="UPA00056">
    <property type="reaction ID" value="UER00097"/>
</dbReference>
<dbReference type="UniPathway" id="UPA00059">
    <property type="reaction ID" value="UER00105"/>
</dbReference>
<dbReference type="Proteomes" id="UP000006575">
    <property type="component" value="Chromosome"/>
</dbReference>
<dbReference type="GO" id="GO:0051539">
    <property type="term" value="F:4 iron, 4 sulfur cluster binding"/>
    <property type="evidence" value="ECO:0007669"/>
    <property type="project" value="UniProtKB-UniRule"/>
</dbReference>
<dbReference type="GO" id="GO:0051745">
    <property type="term" value="F:4-hydroxy-3-methylbut-2-enyl diphosphate reductase activity"/>
    <property type="evidence" value="ECO:0007669"/>
    <property type="project" value="UniProtKB-UniRule"/>
</dbReference>
<dbReference type="GO" id="GO:0046872">
    <property type="term" value="F:metal ion binding"/>
    <property type="evidence" value="ECO:0007669"/>
    <property type="project" value="UniProtKB-KW"/>
</dbReference>
<dbReference type="GO" id="GO:0050992">
    <property type="term" value="P:dimethylallyl diphosphate biosynthetic process"/>
    <property type="evidence" value="ECO:0007669"/>
    <property type="project" value="UniProtKB-UniRule"/>
</dbReference>
<dbReference type="GO" id="GO:0019288">
    <property type="term" value="P:isopentenyl diphosphate biosynthetic process, methylerythritol 4-phosphate pathway"/>
    <property type="evidence" value="ECO:0007669"/>
    <property type="project" value="UniProtKB-UniRule"/>
</dbReference>
<dbReference type="GO" id="GO:0016114">
    <property type="term" value="P:terpenoid biosynthetic process"/>
    <property type="evidence" value="ECO:0007669"/>
    <property type="project" value="UniProtKB-UniRule"/>
</dbReference>
<dbReference type="CDD" id="cd13944">
    <property type="entry name" value="lytB_ispH"/>
    <property type="match status" value="1"/>
</dbReference>
<dbReference type="Gene3D" id="3.40.50.11270">
    <property type="match status" value="1"/>
</dbReference>
<dbReference type="Gene3D" id="3.40.1010.20">
    <property type="entry name" value="4-hydroxy-3-methylbut-2-enyl diphosphate reductase, catalytic domain"/>
    <property type="match status" value="2"/>
</dbReference>
<dbReference type="HAMAP" id="MF_00191">
    <property type="entry name" value="IspH"/>
    <property type="match status" value="1"/>
</dbReference>
<dbReference type="InterPro" id="IPR003451">
    <property type="entry name" value="LytB/IspH"/>
</dbReference>
<dbReference type="NCBIfam" id="TIGR00216">
    <property type="entry name" value="ispH_lytB"/>
    <property type="match status" value="1"/>
</dbReference>
<dbReference type="NCBIfam" id="NF002190">
    <property type="entry name" value="PRK01045.1-4"/>
    <property type="match status" value="1"/>
</dbReference>
<dbReference type="PANTHER" id="PTHR30426">
    <property type="entry name" value="4-HYDROXY-3-METHYLBUT-2-ENYL DIPHOSPHATE REDUCTASE"/>
    <property type="match status" value="1"/>
</dbReference>
<dbReference type="PANTHER" id="PTHR30426:SF0">
    <property type="entry name" value="4-HYDROXY-3-METHYLBUT-2-ENYL DIPHOSPHATE REDUCTASE"/>
    <property type="match status" value="1"/>
</dbReference>
<dbReference type="Pfam" id="PF02401">
    <property type="entry name" value="LYTB"/>
    <property type="match status" value="1"/>
</dbReference>
<evidence type="ECO:0000255" key="1">
    <source>
        <dbReference type="HAMAP-Rule" id="MF_00191"/>
    </source>
</evidence>
<feature type="chain" id="PRO_1000077525" description="4-hydroxy-3-methylbut-2-enyl diphosphate reductase">
    <location>
        <begin position="1"/>
        <end position="333"/>
    </location>
</feature>
<feature type="active site" description="Proton donor" evidence="1">
    <location>
        <position position="137"/>
    </location>
</feature>
<feature type="binding site" evidence="1">
    <location>
        <position position="20"/>
    </location>
    <ligand>
        <name>[4Fe-4S] cluster</name>
        <dbReference type="ChEBI" id="CHEBI:49883"/>
    </ligand>
</feature>
<feature type="binding site" evidence="1">
    <location>
        <position position="49"/>
    </location>
    <ligand>
        <name>(2E)-4-hydroxy-3-methylbut-2-enyl diphosphate</name>
        <dbReference type="ChEBI" id="CHEBI:128753"/>
    </ligand>
</feature>
<feature type="binding site" evidence="1">
    <location>
        <position position="49"/>
    </location>
    <ligand>
        <name>dimethylallyl diphosphate</name>
        <dbReference type="ChEBI" id="CHEBI:57623"/>
    </ligand>
</feature>
<feature type="binding site" evidence="1">
    <location>
        <position position="49"/>
    </location>
    <ligand>
        <name>isopentenyl diphosphate</name>
        <dbReference type="ChEBI" id="CHEBI:128769"/>
    </ligand>
</feature>
<feature type="binding site" evidence="1">
    <location>
        <position position="85"/>
    </location>
    <ligand>
        <name>(2E)-4-hydroxy-3-methylbut-2-enyl diphosphate</name>
        <dbReference type="ChEBI" id="CHEBI:128753"/>
    </ligand>
</feature>
<feature type="binding site" evidence="1">
    <location>
        <position position="85"/>
    </location>
    <ligand>
        <name>dimethylallyl diphosphate</name>
        <dbReference type="ChEBI" id="CHEBI:57623"/>
    </ligand>
</feature>
<feature type="binding site" evidence="1">
    <location>
        <position position="85"/>
    </location>
    <ligand>
        <name>isopentenyl diphosphate</name>
        <dbReference type="ChEBI" id="CHEBI:128769"/>
    </ligand>
</feature>
<feature type="binding site" evidence="1">
    <location>
        <position position="107"/>
    </location>
    <ligand>
        <name>[4Fe-4S] cluster</name>
        <dbReference type="ChEBI" id="CHEBI:49883"/>
    </ligand>
</feature>
<feature type="binding site" evidence="1">
    <location>
        <position position="135"/>
    </location>
    <ligand>
        <name>(2E)-4-hydroxy-3-methylbut-2-enyl diphosphate</name>
        <dbReference type="ChEBI" id="CHEBI:128753"/>
    </ligand>
</feature>
<feature type="binding site" evidence="1">
    <location>
        <position position="135"/>
    </location>
    <ligand>
        <name>dimethylallyl diphosphate</name>
        <dbReference type="ChEBI" id="CHEBI:57623"/>
    </ligand>
</feature>
<feature type="binding site" evidence="1">
    <location>
        <position position="135"/>
    </location>
    <ligand>
        <name>isopentenyl diphosphate</name>
        <dbReference type="ChEBI" id="CHEBI:128769"/>
    </ligand>
</feature>
<feature type="binding site" evidence="1">
    <location>
        <position position="176"/>
    </location>
    <ligand>
        <name>(2E)-4-hydroxy-3-methylbut-2-enyl diphosphate</name>
        <dbReference type="ChEBI" id="CHEBI:128753"/>
    </ligand>
</feature>
<feature type="binding site" evidence="1">
    <location>
        <position position="206"/>
    </location>
    <ligand>
        <name>[4Fe-4S] cluster</name>
        <dbReference type="ChEBI" id="CHEBI:49883"/>
    </ligand>
</feature>
<feature type="binding site" evidence="1">
    <location>
        <position position="234"/>
    </location>
    <ligand>
        <name>(2E)-4-hydroxy-3-methylbut-2-enyl diphosphate</name>
        <dbReference type="ChEBI" id="CHEBI:128753"/>
    </ligand>
</feature>
<feature type="binding site" evidence="1">
    <location>
        <position position="234"/>
    </location>
    <ligand>
        <name>dimethylallyl diphosphate</name>
        <dbReference type="ChEBI" id="CHEBI:57623"/>
    </ligand>
</feature>
<feature type="binding site" evidence="1">
    <location>
        <position position="234"/>
    </location>
    <ligand>
        <name>isopentenyl diphosphate</name>
        <dbReference type="ChEBI" id="CHEBI:128769"/>
    </ligand>
</feature>
<feature type="binding site" evidence="1">
    <location>
        <position position="235"/>
    </location>
    <ligand>
        <name>(2E)-4-hydroxy-3-methylbut-2-enyl diphosphate</name>
        <dbReference type="ChEBI" id="CHEBI:128753"/>
    </ligand>
</feature>
<feature type="binding site" evidence="1">
    <location>
        <position position="235"/>
    </location>
    <ligand>
        <name>dimethylallyl diphosphate</name>
        <dbReference type="ChEBI" id="CHEBI:57623"/>
    </ligand>
</feature>
<feature type="binding site" evidence="1">
    <location>
        <position position="235"/>
    </location>
    <ligand>
        <name>isopentenyl diphosphate</name>
        <dbReference type="ChEBI" id="CHEBI:128769"/>
    </ligand>
</feature>
<feature type="binding site" evidence="1">
    <location>
        <position position="236"/>
    </location>
    <ligand>
        <name>(2E)-4-hydroxy-3-methylbut-2-enyl diphosphate</name>
        <dbReference type="ChEBI" id="CHEBI:128753"/>
    </ligand>
</feature>
<feature type="binding site" evidence="1">
    <location>
        <position position="236"/>
    </location>
    <ligand>
        <name>dimethylallyl diphosphate</name>
        <dbReference type="ChEBI" id="CHEBI:57623"/>
    </ligand>
</feature>
<feature type="binding site" evidence="1">
    <location>
        <position position="236"/>
    </location>
    <ligand>
        <name>isopentenyl diphosphate</name>
        <dbReference type="ChEBI" id="CHEBI:128769"/>
    </ligand>
</feature>
<feature type="binding site" evidence="1">
    <location>
        <position position="279"/>
    </location>
    <ligand>
        <name>(2E)-4-hydroxy-3-methylbut-2-enyl diphosphate</name>
        <dbReference type="ChEBI" id="CHEBI:128753"/>
    </ligand>
</feature>
<feature type="binding site" evidence="1">
    <location>
        <position position="279"/>
    </location>
    <ligand>
        <name>dimethylallyl diphosphate</name>
        <dbReference type="ChEBI" id="CHEBI:57623"/>
    </ligand>
</feature>
<feature type="binding site" evidence="1">
    <location>
        <position position="279"/>
    </location>
    <ligand>
        <name>isopentenyl diphosphate</name>
        <dbReference type="ChEBI" id="CHEBI:128769"/>
    </ligand>
</feature>
<protein>
    <recommendedName>
        <fullName evidence="1">4-hydroxy-3-methylbut-2-enyl diphosphate reductase</fullName>
        <shortName evidence="1">HMBPP reductase</shortName>
        <ecNumber evidence="1">1.17.7.4</ecNumber>
    </recommendedName>
</protein>
<name>ISPH_RHIJ3</name>
<gene>
    <name evidence="1" type="primary">ispH</name>
    <name type="ordered locus">RL1030</name>
</gene>
<reference key="1">
    <citation type="journal article" date="2006" name="Genome Biol.">
        <title>The genome of Rhizobium leguminosarum has recognizable core and accessory components.</title>
        <authorList>
            <person name="Young J.P.W."/>
            <person name="Crossman L.C."/>
            <person name="Johnston A.W.B."/>
            <person name="Thomson N.R."/>
            <person name="Ghazoui Z.F."/>
            <person name="Hull K.H."/>
            <person name="Wexler M."/>
            <person name="Curson A.R.J."/>
            <person name="Todd J.D."/>
            <person name="Poole P.S."/>
            <person name="Mauchline T.H."/>
            <person name="East A.K."/>
            <person name="Quail M.A."/>
            <person name="Churcher C."/>
            <person name="Arrowsmith C."/>
            <person name="Cherevach I."/>
            <person name="Chillingworth T."/>
            <person name="Clarke K."/>
            <person name="Cronin A."/>
            <person name="Davis P."/>
            <person name="Fraser A."/>
            <person name="Hance Z."/>
            <person name="Hauser H."/>
            <person name="Jagels K."/>
            <person name="Moule S."/>
            <person name="Mungall K."/>
            <person name="Norbertczak H."/>
            <person name="Rabbinowitsch E."/>
            <person name="Sanders M."/>
            <person name="Simmonds M."/>
            <person name="Whitehead S."/>
            <person name="Parkhill J."/>
        </authorList>
    </citation>
    <scope>NUCLEOTIDE SEQUENCE [LARGE SCALE GENOMIC DNA]</scope>
    <source>
        <strain>DSM 114642 / LMG 32736 / 3841</strain>
    </source>
</reference>
<organism>
    <name type="scientific">Rhizobium johnstonii (strain DSM 114642 / LMG 32736 / 3841)</name>
    <name type="common">Rhizobium leguminosarum bv. viciae</name>
    <dbReference type="NCBI Taxonomy" id="216596"/>
    <lineage>
        <taxon>Bacteria</taxon>
        <taxon>Pseudomonadati</taxon>
        <taxon>Pseudomonadota</taxon>
        <taxon>Alphaproteobacteria</taxon>
        <taxon>Hyphomicrobiales</taxon>
        <taxon>Rhizobiaceae</taxon>
        <taxon>Rhizobium/Agrobacterium group</taxon>
        <taxon>Rhizobium</taxon>
        <taxon>Rhizobium johnstonii</taxon>
    </lineage>
</organism>
<sequence length="333" mass="35953">MNIAAKPPLTIRLCGPRGFCAGVDRAIQIVVLALKSYGAPVYVRHEIVHNRYVVEGLEAKGAVFVEELDEIPAEHRAQPVVFSAHGVPKSVPEDAASRNLFYLDATCPLVSKVHKQAMRHNRLGRHVVLIGHAGHPEVIGTMGQLPEGSVSLIETIEDADAYVPVDPDNLGYVTQTTLSVDDTAGVITRLHERFPNLTAPAADSICYATTNRQEVVKQAAPGCDLFIIVGAPNSSNSKRLVEVALRAGAKKSILVQRAAELDWDEIGAISTLGLSAGASAPEVIVNEIIEAFRARFDARVELAETVQETENFLVNRELRNIELTAADMAFVNG</sequence>
<comment type="function">
    <text evidence="1">Catalyzes the conversion of 1-hydroxy-2-methyl-2-(E)-butenyl 4-diphosphate (HMBPP) into a mixture of isopentenyl diphosphate (IPP) and dimethylallyl diphosphate (DMAPP). Acts in the terminal step of the DOXP/MEP pathway for isoprenoid precursor biosynthesis.</text>
</comment>
<comment type="catalytic activity">
    <reaction evidence="1">
        <text>isopentenyl diphosphate + 2 oxidized [2Fe-2S]-[ferredoxin] + H2O = (2E)-4-hydroxy-3-methylbut-2-enyl diphosphate + 2 reduced [2Fe-2S]-[ferredoxin] + 2 H(+)</text>
        <dbReference type="Rhea" id="RHEA:24488"/>
        <dbReference type="Rhea" id="RHEA-COMP:10000"/>
        <dbReference type="Rhea" id="RHEA-COMP:10001"/>
        <dbReference type="ChEBI" id="CHEBI:15377"/>
        <dbReference type="ChEBI" id="CHEBI:15378"/>
        <dbReference type="ChEBI" id="CHEBI:33737"/>
        <dbReference type="ChEBI" id="CHEBI:33738"/>
        <dbReference type="ChEBI" id="CHEBI:128753"/>
        <dbReference type="ChEBI" id="CHEBI:128769"/>
        <dbReference type="EC" id="1.17.7.4"/>
    </reaction>
</comment>
<comment type="catalytic activity">
    <reaction evidence="1">
        <text>dimethylallyl diphosphate + 2 oxidized [2Fe-2S]-[ferredoxin] + H2O = (2E)-4-hydroxy-3-methylbut-2-enyl diphosphate + 2 reduced [2Fe-2S]-[ferredoxin] + 2 H(+)</text>
        <dbReference type="Rhea" id="RHEA:24825"/>
        <dbReference type="Rhea" id="RHEA-COMP:10000"/>
        <dbReference type="Rhea" id="RHEA-COMP:10001"/>
        <dbReference type="ChEBI" id="CHEBI:15377"/>
        <dbReference type="ChEBI" id="CHEBI:15378"/>
        <dbReference type="ChEBI" id="CHEBI:33737"/>
        <dbReference type="ChEBI" id="CHEBI:33738"/>
        <dbReference type="ChEBI" id="CHEBI:57623"/>
        <dbReference type="ChEBI" id="CHEBI:128753"/>
        <dbReference type="EC" id="1.17.7.4"/>
    </reaction>
</comment>
<comment type="cofactor">
    <cofactor evidence="1">
        <name>[4Fe-4S] cluster</name>
        <dbReference type="ChEBI" id="CHEBI:49883"/>
    </cofactor>
    <text evidence="1">Binds 1 [4Fe-4S] cluster per subunit.</text>
</comment>
<comment type="pathway">
    <text evidence="1">Isoprenoid biosynthesis; dimethylallyl diphosphate biosynthesis; dimethylallyl diphosphate from (2E)-4-hydroxy-3-methylbutenyl diphosphate: step 1/1.</text>
</comment>
<comment type="pathway">
    <text evidence="1">Isoprenoid biosynthesis; isopentenyl diphosphate biosynthesis via DXP pathway; isopentenyl diphosphate from 1-deoxy-D-xylulose 5-phosphate: step 6/6.</text>
</comment>
<comment type="similarity">
    <text evidence="1">Belongs to the IspH family.</text>
</comment>